<keyword id="KW-0027">Amidation</keyword>
<keyword id="KW-0208">D-amino acid</keyword>
<keyword id="KW-1015">Disulfide bond</keyword>
<keyword id="KW-0379">Hydroxylation</keyword>
<keyword id="KW-0872">Ion channel impairing toxin</keyword>
<keyword id="KW-0528">Neurotoxin</keyword>
<keyword id="KW-0964">Secreted</keyword>
<keyword id="KW-0732">Signal</keyword>
<keyword id="KW-0800">Toxin</keyword>
<accession>A0A1P8NVR4</accession>
<reference key="1">
    <citation type="journal article" date="2017" name="J. Proteome Res.">
        <title>Contryphan genes and mature peptides in the venom of nine cone snail species by transcriptomic and mass spectrometric analysis.</title>
        <authorList>
            <person name="Vijayasarathy M."/>
            <person name="Basheer S.M."/>
            <person name="Franklin J.B."/>
            <person name="Balaram P."/>
        </authorList>
    </citation>
    <scope>NUCLEOTIDE SEQUENCE [MRNA]</scope>
    <source>
        <tissue>Venom duct</tissue>
    </source>
</reference>
<dbReference type="EMBL" id="KX289880">
    <property type="protein sequence ID" value="APX52857.1"/>
    <property type="molecule type" value="mRNA"/>
</dbReference>
<dbReference type="ConoServer" id="9759">
    <property type="toxin name" value="Contryphan-Li2 precursor"/>
</dbReference>
<dbReference type="GO" id="GO:0005576">
    <property type="term" value="C:extracellular region"/>
    <property type="evidence" value="ECO:0007669"/>
    <property type="project" value="UniProtKB-SubCell"/>
</dbReference>
<dbReference type="GO" id="GO:0008200">
    <property type="term" value="F:ion channel inhibitor activity"/>
    <property type="evidence" value="ECO:0007669"/>
    <property type="project" value="InterPro"/>
</dbReference>
<dbReference type="GO" id="GO:0090729">
    <property type="term" value="F:toxin activity"/>
    <property type="evidence" value="ECO:0007669"/>
    <property type="project" value="UniProtKB-KW"/>
</dbReference>
<dbReference type="InterPro" id="IPR004214">
    <property type="entry name" value="Conotoxin"/>
</dbReference>
<dbReference type="Pfam" id="PF02950">
    <property type="entry name" value="Conotoxin"/>
    <property type="match status" value="1"/>
</dbReference>
<proteinExistence type="inferred from homology"/>
<feature type="signal peptide" evidence="6">
    <location>
        <begin position="1"/>
        <end position="23"/>
    </location>
</feature>
<feature type="propeptide" id="PRO_0000445132" evidence="7">
    <location>
        <begin position="24"/>
        <end position="52"/>
    </location>
</feature>
<feature type="peptide" id="PRO_5013247318" description="Contryphan-Li2" evidence="7">
    <location>
        <begin position="53"/>
        <end position="60"/>
    </location>
</feature>
<feature type="modified residue" description="4-hydroxyproline" evidence="3">
    <location>
        <position position="58"/>
    </location>
</feature>
<feature type="modified residue" description="D-tryptophan" evidence="3">
    <location>
        <position position="59"/>
    </location>
</feature>
<feature type="modified residue" description="Cysteine amide" evidence="3">
    <location>
        <position position="60"/>
    </location>
</feature>
<feature type="disulfide bond" evidence="3">
    <location>
        <begin position="54"/>
        <end position="60"/>
    </location>
</feature>
<protein>
    <recommendedName>
        <fullName evidence="7">Contryphan-Li2</fullName>
    </recommendedName>
</protein>
<evidence type="ECO:0000250" key="1">
    <source>
        <dbReference type="UniProtKB" id="P0C248"/>
    </source>
</evidence>
<evidence type="ECO:0000250" key="2">
    <source>
        <dbReference type="UniProtKB" id="P0C250"/>
    </source>
</evidence>
<evidence type="ECO:0000250" key="3">
    <source>
        <dbReference type="UniProtKB" id="P58786"/>
    </source>
</evidence>
<evidence type="ECO:0000250" key="4">
    <source>
        <dbReference type="UniProtKB" id="P62903"/>
    </source>
</evidence>
<evidence type="ECO:0000250" key="5">
    <source>
        <dbReference type="UniProtKB" id="P83047"/>
    </source>
</evidence>
<evidence type="ECO:0000255" key="6"/>
<evidence type="ECO:0000305" key="7"/>
<evidence type="ECO:0000305" key="8">
    <source>
    </source>
</evidence>
<comment type="function">
    <text evidence="1 2 4 5">Its target is unknown, but this toxin may modulate voltage-activated calcium channels (Cav) or calcium-dependent potassium channels (KCa).</text>
</comment>
<comment type="subcellular location">
    <subcellularLocation>
        <location evidence="8">Secreted</location>
    </subcellularLocation>
</comment>
<comment type="tissue specificity">
    <text evidence="8">Expressed by the venom duct.</text>
</comment>
<comment type="domain">
    <text evidence="7">The cysteine framework is C-C.</text>
</comment>
<comment type="similarity">
    <text evidence="7">Belongs to the O2 superfamily. Contryphan family.</text>
</comment>
<sequence length="61" mass="6575">MEKLTMLVLVAAVLLSAQVMVQGDGDQPADRDAVPRDDNPGGTIGKFMYILHGCPFQPWCG</sequence>
<name>COW2_CONLI</name>
<organism>
    <name type="scientific">Conus lividus</name>
    <name type="common">Livid cone</name>
    <dbReference type="NCBI Taxonomy" id="89426"/>
    <lineage>
        <taxon>Eukaryota</taxon>
        <taxon>Metazoa</taxon>
        <taxon>Spiralia</taxon>
        <taxon>Lophotrochozoa</taxon>
        <taxon>Mollusca</taxon>
        <taxon>Gastropoda</taxon>
        <taxon>Caenogastropoda</taxon>
        <taxon>Neogastropoda</taxon>
        <taxon>Conoidea</taxon>
        <taxon>Conidae</taxon>
        <taxon>Conus</taxon>
        <taxon>Lividoconus</taxon>
    </lineage>
</organism>